<evidence type="ECO:0000250" key="1">
    <source>
        <dbReference type="UniProtKB" id="A0A3G1DJF0"/>
    </source>
</evidence>
<evidence type="ECO:0000250" key="2">
    <source>
        <dbReference type="UniProtKB" id="Q5NUF3"/>
    </source>
</evidence>
<evidence type="ECO:0000269" key="3">
    <source>
    </source>
</evidence>
<evidence type="ECO:0000303" key="4">
    <source>
    </source>
</evidence>
<evidence type="ECO:0000305" key="5"/>
<evidence type="ECO:0000305" key="6">
    <source>
    </source>
</evidence>
<comment type="function">
    <text evidence="1 3 6">Probable carboxylesterase; part of the gene cluster that mediates the biosynthesis of squalestatin S1 (SQS1, also known as zaragozic acid A), a heavily oxidized fungal polyketide that offers potent cholesterol lowering activity by targeting squalene synthase (SS) (PubMed:28605916). SQS1 is composed of a 2,8-dioxobicyclic[3.2.1]octane-3,4,5-tricarboxyclic acid core that is connected to two lipophilic polyketide arms (PubMed:28605916). These initial steps feature the priming of an unusual benzoic acid starter unit onto the highly reducing polyketide synthase clz14, followed by oxaloacetate extension and product release to generate a tricarboxylic acid containing product (PubMed:28605916). The phenylalanine ammonia lyase (PAL) clz10 and the acyl-CoA ligase clz12 are involved in transforming phenylalanine into benzoyl-CoA (PubMed:28605916). The citrate synthase-like protein clz17 is involved in connecting the C-alpha-carbons of the hexaketide chain and oxaloacetate to afford the tricarboxylic acid unit (PubMed:28605916). The potential hydrolytic enzymes, clz11 and clz13, are in close proximity to pks2 and may participate in product release (PubMed:28605916). On the other side, the tetraketide arm is synthesized by a the squalestatin tetraketide synthase clz2 and enzymatically esterified to the core in the last biosynthetic step, by the acetyltransferase clz6 (By similarity). The biosynthesis of the tetraketide must involve 3 rounds of chain extension (By similarity). After the first and second rounds methyl-transfer occurs, and in all rounds of extension the ketoreductase and dehydratase are active (By similarity). The enoyl reductase and C-MeT of clz2 are not active in the final round of extension (By similarity). The acetyltransferase clz6 appears to have a broad substrate selectivity for its acyl CoA substrate, allowing the in vitro synthesis of novel squalestatins (By similarity). The biosynthesis of SQS1 requires several oxidative steps likely performed by oxidoreductases clz3, clz15 and clz16 (Probable). Finally, in support of the identification of the cluster as being responsible for SQS1 production, the cluster contains a gene encoding a putative squalene synthase (SS) clz20, suggesting a likely mechanism for self-resistance (Probable).</text>
</comment>
<comment type="catalytic activity">
    <reaction evidence="5">
        <text>a carboxylic ester + H2O = an alcohol + a carboxylate + H(+)</text>
        <dbReference type="Rhea" id="RHEA:21164"/>
        <dbReference type="ChEBI" id="CHEBI:15377"/>
        <dbReference type="ChEBI" id="CHEBI:15378"/>
        <dbReference type="ChEBI" id="CHEBI:29067"/>
        <dbReference type="ChEBI" id="CHEBI:30879"/>
        <dbReference type="ChEBI" id="CHEBI:33308"/>
        <dbReference type="EC" id="3.1.1.1"/>
    </reaction>
</comment>
<comment type="pathway">
    <text evidence="3">Secondary metabolite biosynthesis.</text>
</comment>
<comment type="similarity">
    <text evidence="5">Belongs to the 'GDXG' lipolytic enzyme family.</text>
</comment>
<dbReference type="EC" id="3.1.1.1" evidence="5"/>
<dbReference type="EMBL" id="MF806530">
    <property type="protein sequence ID" value="AXF50645.1"/>
    <property type="molecule type" value="Genomic_DNA"/>
</dbReference>
<dbReference type="ESTHER" id="coclu-clz11">
    <property type="family name" value="Hormone-sensitive_lipase_like"/>
</dbReference>
<dbReference type="GO" id="GO:0106435">
    <property type="term" value="F:carboxylesterase activity"/>
    <property type="evidence" value="ECO:0007669"/>
    <property type="project" value="UniProtKB-EC"/>
</dbReference>
<dbReference type="Gene3D" id="3.40.50.1820">
    <property type="entry name" value="alpha/beta hydrolase"/>
    <property type="match status" value="1"/>
</dbReference>
<dbReference type="InterPro" id="IPR013094">
    <property type="entry name" value="AB_hydrolase_3"/>
</dbReference>
<dbReference type="InterPro" id="IPR029058">
    <property type="entry name" value="AB_hydrolase_fold"/>
</dbReference>
<dbReference type="InterPro" id="IPR050466">
    <property type="entry name" value="Carboxylest/Gibb_receptor"/>
</dbReference>
<dbReference type="PANTHER" id="PTHR23024:SF24">
    <property type="entry name" value="ALPHA_BETA HYDROLASE FOLD-3 DOMAIN-CONTAINING PROTEIN"/>
    <property type="match status" value="1"/>
</dbReference>
<dbReference type="PANTHER" id="PTHR23024">
    <property type="entry name" value="ARYLACETAMIDE DEACETYLASE"/>
    <property type="match status" value="1"/>
</dbReference>
<dbReference type="Pfam" id="PF07859">
    <property type="entry name" value="Abhydrolase_3"/>
    <property type="match status" value="1"/>
</dbReference>
<dbReference type="SUPFAM" id="SSF53474">
    <property type="entry name" value="alpha/beta-Hydrolases"/>
    <property type="match status" value="1"/>
</dbReference>
<protein>
    <recommendedName>
        <fullName evidence="4">Probable carboxylesterase clz11</fullName>
        <ecNumber evidence="5">3.1.1.1</ecNumber>
    </recommendedName>
    <alternativeName>
        <fullName evidence="4">Squalestatin S1 biosynthesis cluster protein clz11</fullName>
    </alternativeName>
    <alternativeName>
        <fullName evidence="4">Zaragozic acid A biosynthesis cluster protein 11</fullName>
    </alternativeName>
</protein>
<reference key="1">
    <citation type="journal article" date="2017" name="Org. Lett.">
        <title>Identification and heterologous production of a benzoyl-primed tricarboxylic acid polyketide intermediate from the zaragozic acid A biosynthetic pathway.</title>
        <authorList>
            <person name="Liu N."/>
            <person name="Hung Y.S."/>
            <person name="Gao S.S."/>
            <person name="Hang L."/>
            <person name="Zou Y."/>
            <person name="Chooi Y.H."/>
            <person name="Tang Y."/>
        </authorList>
    </citation>
    <scope>NUCLEOTIDE SEQUENCE [GENOMIC DNA]</scope>
    <scope>FUNCTION</scope>
    <scope>CATALYTIC ACTIVITY</scope>
    <scope>PATHWAY</scope>
    <source>
        <strain>ATCC 74067</strain>
    </source>
</reference>
<sequence length="218" mass="24100">MAGDLWLVGDCTNHGGLSDAIIVSPDYRLLPEATGADIFDDVEAFWNWLHTSLPSLAQSYSWQAQPDLTRILCVGQSGGGSMAVHSALLHPEYSIKVIVSLYAPLYHNVPNLTVPRPRRILGTMPPPPRKAEGLIRSYIKQSKGSVRTGGNPFDMWELLLCLLQQGRLISLMNIKPDSRLDTPFLLRQVGKLPPLWLIHGEDDSVVGPSTICVHRVIF</sequence>
<feature type="chain" id="PRO_0000452634" description="Probable carboxylesterase clz11">
    <location>
        <begin position="1"/>
        <end position="218"/>
    </location>
</feature>
<feature type="short sequence motif" description="Involved in the stabilization of the negatively charged intermediate by the formation of the oxyanion hole" evidence="2">
    <location>
        <begin position="7"/>
        <end position="9"/>
    </location>
</feature>
<feature type="active site" evidence="2">
    <location>
        <position position="77"/>
    </location>
</feature>
<accession>A0A345BJN2</accession>
<proteinExistence type="evidence at protein level"/>
<keyword id="KW-0378">Hydrolase</keyword>
<gene>
    <name evidence="4" type="primary">clz11</name>
</gene>
<organism>
    <name type="scientific">Cochliobolus lunatus</name>
    <name type="common">Filamentous fungus</name>
    <name type="synonym">Curvularia lunata</name>
    <dbReference type="NCBI Taxonomy" id="5503"/>
    <lineage>
        <taxon>Eukaryota</taxon>
        <taxon>Fungi</taxon>
        <taxon>Dikarya</taxon>
        <taxon>Ascomycota</taxon>
        <taxon>Pezizomycotina</taxon>
        <taxon>Dothideomycetes</taxon>
        <taxon>Pleosporomycetidae</taxon>
        <taxon>Pleosporales</taxon>
        <taxon>Pleosporineae</taxon>
        <taxon>Pleosporaceae</taxon>
        <taxon>Curvularia</taxon>
    </lineage>
</organism>
<name>CLZ11_COCLU</name>